<accession>C6E4K5</accession>
<sequence length="280" mass="29806">MKKLQLLAPAKVNYRLDVLGKRPDGYHELRMIMQRVDLCDEIEIALTDVPGIRVTCGRKGVPDGPGNIAWRAADALLKLSGKEVGIDISIAKKIPVGAGLGGGSSDAATVLMGVNELLGLGLTDERLMEIGVKLGADVPFFIFKKPALAEGIGDRLTALEEVPSLWVVLVNPGIHVSTAWVYQNLRLTTGNPITIIPRSYSSLDEVCALLSNDLEPVTCGRFPLVSEVKEVLLAAGARGSLMSGSGSTVFGLFDDENAARTAAAEIEKTRGWFAAAVRTI</sequence>
<comment type="function">
    <text evidence="1">Catalyzes the phosphorylation of the position 2 hydroxy group of 4-diphosphocytidyl-2C-methyl-D-erythritol.</text>
</comment>
<comment type="catalytic activity">
    <reaction evidence="1">
        <text>4-CDP-2-C-methyl-D-erythritol + ATP = 4-CDP-2-C-methyl-D-erythritol 2-phosphate + ADP + H(+)</text>
        <dbReference type="Rhea" id="RHEA:18437"/>
        <dbReference type="ChEBI" id="CHEBI:15378"/>
        <dbReference type="ChEBI" id="CHEBI:30616"/>
        <dbReference type="ChEBI" id="CHEBI:57823"/>
        <dbReference type="ChEBI" id="CHEBI:57919"/>
        <dbReference type="ChEBI" id="CHEBI:456216"/>
        <dbReference type="EC" id="2.7.1.148"/>
    </reaction>
</comment>
<comment type="pathway">
    <text evidence="1">Isoprenoid biosynthesis; isopentenyl diphosphate biosynthesis via DXP pathway; isopentenyl diphosphate from 1-deoxy-D-xylulose 5-phosphate: step 3/6.</text>
</comment>
<comment type="similarity">
    <text evidence="1">Belongs to the GHMP kinase family. IspE subfamily.</text>
</comment>
<protein>
    <recommendedName>
        <fullName evidence="1">4-diphosphocytidyl-2-C-methyl-D-erythritol kinase</fullName>
        <shortName evidence="1">CMK</shortName>
        <ecNumber evidence="1">2.7.1.148</ecNumber>
    </recommendedName>
    <alternativeName>
        <fullName evidence="1">4-(cytidine-5'-diphospho)-2-C-methyl-D-erythritol kinase</fullName>
    </alternativeName>
</protein>
<feature type="chain" id="PRO_1000202380" description="4-diphosphocytidyl-2-C-methyl-D-erythritol kinase">
    <location>
        <begin position="1"/>
        <end position="280"/>
    </location>
</feature>
<feature type="active site" evidence="1">
    <location>
        <position position="11"/>
    </location>
</feature>
<feature type="active site" evidence="1">
    <location>
        <position position="137"/>
    </location>
</feature>
<feature type="binding site" evidence="1">
    <location>
        <begin position="95"/>
        <end position="105"/>
    </location>
    <ligand>
        <name>ATP</name>
        <dbReference type="ChEBI" id="CHEBI:30616"/>
    </ligand>
</feature>
<name>ISPE_GEOSM</name>
<reference key="1">
    <citation type="submission" date="2009-07" db="EMBL/GenBank/DDBJ databases">
        <title>Complete sequence of Geobacter sp. M21.</title>
        <authorList>
            <consortium name="US DOE Joint Genome Institute"/>
            <person name="Lucas S."/>
            <person name="Copeland A."/>
            <person name="Lapidus A."/>
            <person name="Glavina del Rio T."/>
            <person name="Dalin E."/>
            <person name="Tice H."/>
            <person name="Bruce D."/>
            <person name="Goodwin L."/>
            <person name="Pitluck S."/>
            <person name="Saunders E."/>
            <person name="Brettin T."/>
            <person name="Detter J.C."/>
            <person name="Han C."/>
            <person name="Larimer F."/>
            <person name="Land M."/>
            <person name="Hauser L."/>
            <person name="Kyrpides N."/>
            <person name="Ovchinnikova G."/>
            <person name="Lovley D."/>
        </authorList>
    </citation>
    <scope>NUCLEOTIDE SEQUENCE [LARGE SCALE GENOMIC DNA]</scope>
    <source>
        <strain>M21</strain>
    </source>
</reference>
<keyword id="KW-0067">ATP-binding</keyword>
<keyword id="KW-0414">Isoprene biosynthesis</keyword>
<keyword id="KW-0418">Kinase</keyword>
<keyword id="KW-0547">Nucleotide-binding</keyword>
<keyword id="KW-0808">Transferase</keyword>
<gene>
    <name evidence="1" type="primary">ispE</name>
    <name type="ordered locus">GM21_1446</name>
</gene>
<dbReference type="EC" id="2.7.1.148" evidence="1"/>
<dbReference type="EMBL" id="CP001661">
    <property type="protein sequence ID" value="ACT17503.1"/>
    <property type="molecule type" value="Genomic_DNA"/>
</dbReference>
<dbReference type="SMR" id="C6E4K5"/>
<dbReference type="STRING" id="443144.GM21_1446"/>
<dbReference type="KEGG" id="gem:GM21_1446"/>
<dbReference type="eggNOG" id="COG1947">
    <property type="taxonomic scope" value="Bacteria"/>
</dbReference>
<dbReference type="HOGENOM" id="CLU_053057_1_1_7"/>
<dbReference type="OrthoDB" id="9809438at2"/>
<dbReference type="UniPathway" id="UPA00056">
    <property type="reaction ID" value="UER00094"/>
</dbReference>
<dbReference type="GO" id="GO:0050515">
    <property type="term" value="F:4-(cytidine 5'-diphospho)-2-C-methyl-D-erythritol kinase activity"/>
    <property type="evidence" value="ECO:0007669"/>
    <property type="project" value="UniProtKB-UniRule"/>
</dbReference>
<dbReference type="GO" id="GO:0005524">
    <property type="term" value="F:ATP binding"/>
    <property type="evidence" value="ECO:0007669"/>
    <property type="project" value="UniProtKB-UniRule"/>
</dbReference>
<dbReference type="GO" id="GO:0019288">
    <property type="term" value="P:isopentenyl diphosphate biosynthetic process, methylerythritol 4-phosphate pathway"/>
    <property type="evidence" value="ECO:0007669"/>
    <property type="project" value="UniProtKB-UniRule"/>
</dbReference>
<dbReference type="GO" id="GO:0016114">
    <property type="term" value="P:terpenoid biosynthetic process"/>
    <property type="evidence" value="ECO:0007669"/>
    <property type="project" value="InterPro"/>
</dbReference>
<dbReference type="Gene3D" id="3.30.230.10">
    <property type="match status" value="1"/>
</dbReference>
<dbReference type="Gene3D" id="3.30.70.890">
    <property type="entry name" value="GHMP kinase, C-terminal domain"/>
    <property type="match status" value="1"/>
</dbReference>
<dbReference type="HAMAP" id="MF_00061">
    <property type="entry name" value="IspE"/>
    <property type="match status" value="1"/>
</dbReference>
<dbReference type="InterPro" id="IPR013750">
    <property type="entry name" value="GHMP_kinase_C_dom"/>
</dbReference>
<dbReference type="InterPro" id="IPR036554">
    <property type="entry name" value="GHMP_kinase_C_sf"/>
</dbReference>
<dbReference type="InterPro" id="IPR006204">
    <property type="entry name" value="GHMP_kinase_N_dom"/>
</dbReference>
<dbReference type="InterPro" id="IPR004424">
    <property type="entry name" value="IspE"/>
</dbReference>
<dbReference type="InterPro" id="IPR020568">
    <property type="entry name" value="Ribosomal_Su5_D2-typ_SF"/>
</dbReference>
<dbReference type="InterPro" id="IPR014721">
    <property type="entry name" value="Ribsml_uS5_D2-typ_fold_subgr"/>
</dbReference>
<dbReference type="NCBIfam" id="TIGR00154">
    <property type="entry name" value="ispE"/>
    <property type="match status" value="1"/>
</dbReference>
<dbReference type="NCBIfam" id="NF011202">
    <property type="entry name" value="PRK14608.1"/>
    <property type="match status" value="1"/>
</dbReference>
<dbReference type="PANTHER" id="PTHR43527">
    <property type="entry name" value="4-DIPHOSPHOCYTIDYL-2-C-METHYL-D-ERYTHRITOL KINASE, CHLOROPLASTIC"/>
    <property type="match status" value="1"/>
</dbReference>
<dbReference type="PANTHER" id="PTHR43527:SF2">
    <property type="entry name" value="4-DIPHOSPHOCYTIDYL-2-C-METHYL-D-ERYTHRITOL KINASE, CHLOROPLASTIC"/>
    <property type="match status" value="1"/>
</dbReference>
<dbReference type="Pfam" id="PF08544">
    <property type="entry name" value="GHMP_kinases_C"/>
    <property type="match status" value="1"/>
</dbReference>
<dbReference type="Pfam" id="PF00288">
    <property type="entry name" value="GHMP_kinases_N"/>
    <property type="match status" value="1"/>
</dbReference>
<dbReference type="PIRSF" id="PIRSF010376">
    <property type="entry name" value="IspE"/>
    <property type="match status" value="1"/>
</dbReference>
<dbReference type="SUPFAM" id="SSF55060">
    <property type="entry name" value="GHMP Kinase, C-terminal domain"/>
    <property type="match status" value="1"/>
</dbReference>
<dbReference type="SUPFAM" id="SSF54211">
    <property type="entry name" value="Ribosomal protein S5 domain 2-like"/>
    <property type="match status" value="1"/>
</dbReference>
<proteinExistence type="inferred from homology"/>
<evidence type="ECO:0000255" key="1">
    <source>
        <dbReference type="HAMAP-Rule" id="MF_00061"/>
    </source>
</evidence>
<organism>
    <name type="scientific">Geobacter sp. (strain M21)</name>
    <dbReference type="NCBI Taxonomy" id="443144"/>
    <lineage>
        <taxon>Bacteria</taxon>
        <taxon>Pseudomonadati</taxon>
        <taxon>Thermodesulfobacteriota</taxon>
        <taxon>Desulfuromonadia</taxon>
        <taxon>Geobacterales</taxon>
        <taxon>Geobacteraceae</taxon>
        <taxon>Geobacter</taxon>
    </lineage>
</organism>